<comment type="function">
    <text evidence="1">Extracellular serine carboxypeptidase that contributes to pathogenicity.</text>
</comment>
<comment type="catalytic activity">
    <reaction>
        <text>Preferential release of a C-terminal arginine or lysine residue.</text>
        <dbReference type="EC" id="3.4.16.6"/>
    </reaction>
</comment>
<comment type="subcellular location">
    <subcellularLocation>
        <location evidence="5">Cell membrane</location>
        <topology evidence="5">Lipid-anchor</topology>
        <topology evidence="5">GPI-anchor</topology>
    </subcellularLocation>
</comment>
<comment type="similarity">
    <text evidence="5">Belongs to the peptidase S10 family.</text>
</comment>
<name>SPCA_ARTOC</name>
<proteinExistence type="inferred from homology"/>
<sequence length="651" mass="72198">MHLATGLAVALPFIGAASAQYFPPPVEGVTVVESKFDKNVKITYKENDICETTEGVRSFTGHVHLPPNNNDFGVNQNYSINTFFWFFEAREDPKNAPLSIWLNGGPGSSSMIGLFQENGPCMVNNDSNSTTNNPYSWNNKVNMLYIDQPNQVGFSYDVPTNVTVNPINDEVTVADFSNGVPEQNNTLLVGTLGSQNPYATANNTQNAARSIWHFAQVWFQEFPEYKPNNDKVSIWTESYGGRYGPAFTSYFQEQNEKIKNHTITEEGEMHILHLDTVGIINGCVDLMEQATSYPDFAYNNTYGIKAYNQSQYDSMINEFYRTGGCRDQLIHCRDVAAESDPHFYSHNETVNKICNDAGDFCGQKLEDAFESANLGFYDIAHPLNDPFPPQFYKGYLSQAHVLADMGMPVNFSQASDAVWKAFHTVGDYGRGDVRGYIDDLAYLLENGIKVALVYGDRDYICNWFGGEKVSLALNYTGTENFHKAGYTDVKVNSQVGGQVRQYGNFSFTRVYEAGHEVPAYQPEVSLEIFHRIMFNKDIATGEIDIAQKPDYSTTGTADTFHIKNDIPPEPEPTCYVLSMGRTCSEEQVKAVKDGTAVVENYIVKSPAGKKQGPPPTSTSPPSPTSSSEGSVKEFSVSVLGVSVLAAITFFL</sequence>
<accession>C5FW30</accession>
<evidence type="ECO:0000250" key="1"/>
<evidence type="ECO:0000255" key="2"/>
<evidence type="ECO:0000255" key="3">
    <source>
        <dbReference type="PROSITE-ProRule" id="PRU10074"/>
    </source>
</evidence>
<evidence type="ECO:0000256" key="4">
    <source>
        <dbReference type="SAM" id="MobiDB-lite"/>
    </source>
</evidence>
<evidence type="ECO:0000305" key="5"/>
<organism>
    <name type="scientific">Arthroderma otae (strain ATCC MYA-4605 / CBS 113480)</name>
    <name type="common">Microsporum canis</name>
    <dbReference type="NCBI Taxonomy" id="554155"/>
    <lineage>
        <taxon>Eukaryota</taxon>
        <taxon>Fungi</taxon>
        <taxon>Dikarya</taxon>
        <taxon>Ascomycota</taxon>
        <taxon>Pezizomycotina</taxon>
        <taxon>Eurotiomycetes</taxon>
        <taxon>Eurotiomycetidae</taxon>
        <taxon>Onygenales</taxon>
        <taxon>Arthrodermataceae</taxon>
        <taxon>Microsporum</taxon>
    </lineage>
</organism>
<feature type="signal peptide" evidence="2">
    <location>
        <begin position="1"/>
        <end position="19"/>
    </location>
</feature>
<feature type="chain" id="PRO_0000384113" description="Carboxypeptidase S1 homolog A">
    <location>
        <begin position="20"/>
        <end position="625"/>
    </location>
</feature>
<feature type="propeptide" id="PRO_0000384114" description="Removed in mature form" evidence="2">
    <location>
        <begin position="626"/>
        <end position="651"/>
    </location>
</feature>
<feature type="region of interest" description="Disordered" evidence="4">
    <location>
        <begin position="604"/>
        <end position="630"/>
    </location>
</feature>
<feature type="compositionally biased region" description="Pro residues" evidence="4">
    <location>
        <begin position="612"/>
        <end position="623"/>
    </location>
</feature>
<feature type="active site" evidence="3">
    <location>
        <position position="238"/>
    </location>
</feature>
<feature type="active site" evidence="3">
    <location>
        <position position="458"/>
    </location>
</feature>
<feature type="active site" evidence="3">
    <location>
        <position position="515"/>
    </location>
</feature>
<feature type="binding site" evidence="1">
    <location>
        <position position="461"/>
    </location>
    <ligand>
        <name>substrate</name>
    </ligand>
</feature>
<feature type="binding site" evidence="1">
    <location>
        <position position="516"/>
    </location>
    <ligand>
        <name>substrate</name>
    </ligand>
</feature>
<feature type="lipid moiety-binding region" description="GPI-anchor amidated serine" evidence="2">
    <location>
        <position position="625"/>
    </location>
</feature>
<feature type="glycosylation site" description="N-linked (GlcNAc...) asparagine" evidence="2">
    <location>
        <position position="77"/>
    </location>
</feature>
<feature type="glycosylation site" description="N-linked (GlcNAc...) asparagine" evidence="2">
    <location>
        <position position="125"/>
    </location>
</feature>
<feature type="glycosylation site" description="N-linked (GlcNAc...) asparagine" evidence="2">
    <location>
        <position position="128"/>
    </location>
</feature>
<feature type="glycosylation site" description="N-linked (GlcNAc...) asparagine" evidence="2">
    <location>
        <position position="161"/>
    </location>
</feature>
<feature type="glycosylation site" description="N-linked (GlcNAc...) asparagine" evidence="2">
    <location>
        <position position="184"/>
    </location>
</feature>
<feature type="glycosylation site" description="N-linked (GlcNAc...) asparagine" evidence="2">
    <location>
        <position position="202"/>
    </location>
</feature>
<feature type="glycosylation site" description="N-linked (GlcNAc...) asparagine" evidence="2">
    <location>
        <position position="260"/>
    </location>
</feature>
<feature type="glycosylation site" description="N-linked (GlcNAc...) asparagine" evidence="2">
    <location>
        <position position="299"/>
    </location>
</feature>
<feature type="glycosylation site" description="N-linked (GlcNAc...) asparagine" evidence="2">
    <location>
        <position position="308"/>
    </location>
</feature>
<feature type="glycosylation site" description="N-linked (GlcNAc...) asparagine" evidence="2">
    <location>
        <position position="347"/>
    </location>
</feature>
<feature type="glycosylation site" description="N-linked (GlcNAc...) asparagine" evidence="2">
    <location>
        <position position="410"/>
    </location>
</feature>
<feature type="glycosylation site" description="N-linked (GlcNAc...) asparagine" evidence="2">
    <location>
        <position position="474"/>
    </location>
</feature>
<feature type="glycosylation site" description="N-linked (GlcNAc...) asparagine" evidence="2">
    <location>
        <position position="504"/>
    </location>
</feature>
<feature type="disulfide bond" evidence="1">
    <location>
        <begin position="50"/>
        <end position="121"/>
    </location>
</feature>
<feature type="disulfide bond" evidence="1">
    <location>
        <begin position="325"/>
        <end position="361"/>
    </location>
</feature>
<feature type="disulfide bond" evidence="1">
    <location>
        <begin position="332"/>
        <end position="354"/>
    </location>
</feature>
<gene>
    <name type="primary">SCPA</name>
    <name type="ORF">MCYG_06933</name>
</gene>
<reference key="1">
    <citation type="journal article" date="2012" name="MBio">
        <title>Comparative genome analysis of Trichophyton rubrum and related dermatophytes reveals candidate genes involved in infection.</title>
        <authorList>
            <person name="Martinez D.A."/>
            <person name="Oliver B.G."/>
            <person name="Graeser Y."/>
            <person name="Goldberg J.M."/>
            <person name="Li W."/>
            <person name="Martinez-Rossi N.M."/>
            <person name="Monod M."/>
            <person name="Shelest E."/>
            <person name="Barton R.C."/>
            <person name="Birch E."/>
            <person name="Brakhage A.A."/>
            <person name="Chen Z."/>
            <person name="Gurr S.J."/>
            <person name="Heiman D."/>
            <person name="Heitman J."/>
            <person name="Kosti I."/>
            <person name="Rossi A."/>
            <person name="Saif S."/>
            <person name="Samalova M."/>
            <person name="Saunders C.W."/>
            <person name="Shea T."/>
            <person name="Summerbell R.C."/>
            <person name="Xu J."/>
            <person name="Young S."/>
            <person name="Zeng Q."/>
            <person name="Birren B.W."/>
            <person name="Cuomo C.A."/>
            <person name="White T.C."/>
        </authorList>
    </citation>
    <scope>NUCLEOTIDE SEQUENCE [LARGE SCALE GENOMIC DNA]</scope>
    <source>
        <strain>ATCC MYA-4605 / CBS 113480</strain>
    </source>
</reference>
<protein>
    <recommendedName>
        <fullName>Carboxypeptidase S1 homolog A</fullName>
        <ecNumber>3.4.16.6</ecNumber>
    </recommendedName>
    <alternativeName>
        <fullName>Serine carboxypeptidase A</fullName>
        <shortName>SPCA</shortName>
    </alternativeName>
</protein>
<keyword id="KW-0121">Carboxypeptidase</keyword>
<keyword id="KW-1003">Cell membrane</keyword>
<keyword id="KW-1015">Disulfide bond</keyword>
<keyword id="KW-0325">Glycoprotein</keyword>
<keyword id="KW-0336">GPI-anchor</keyword>
<keyword id="KW-0378">Hydrolase</keyword>
<keyword id="KW-0449">Lipoprotein</keyword>
<keyword id="KW-0472">Membrane</keyword>
<keyword id="KW-0645">Protease</keyword>
<keyword id="KW-1185">Reference proteome</keyword>
<keyword id="KW-0732">Signal</keyword>
<keyword id="KW-0843">Virulence</keyword>
<dbReference type="EC" id="3.4.16.6"/>
<dbReference type="EMBL" id="DS995706">
    <property type="protein sequence ID" value="EEQ34114.1"/>
    <property type="molecule type" value="Genomic_DNA"/>
</dbReference>
<dbReference type="RefSeq" id="XP_002844969.1">
    <property type="nucleotide sequence ID" value="XM_002844923.1"/>
</dbReference>
<dbReference type="SMR" id="C5FW30"/>
<dbReference type="STRING" id="554155.C5FW30"/>
<dbReference type="ESTHER" id="artoc-spca">
    <property type="family name" value="Carboxypeptidase_S10"/>
</dbReference>
<dbReference type="MEROPS" id="S10.016"/>
<dbReference type="GlyCosmos" id="C5FW30">
    <property type="glycosylation" value="13 sites, No reported glycans"/>
</dbReference>
<dbReference type="GeneID" id="9228194"/>
<dbReference type="VEuPathDB" id="FungiDB:MCYG_06933"/>
<dbReference type="eggNOG" id="KOG1282">
    <property type="taxonomic scope" value="Eukaryota"/>
</dbReference>
<dbReference type="HOGENOM" id="CLU_008523_10_3_1"/>
<dbReference type="OMA" id="QNPWATA"/>
<dbReference type="OrthoDB" id="443318at2759"/>
<dbReference type="Proteomes" id="UP000002035">
    <property type="component" value="Unassembled WGS sequence"/>
</dbReference>
<dbReference type="GO" id="GO:0000324">
    <property type="term" value="C:fungal-type vacuole"/>
    <property type="evidence" value="ECO:0007669"/>
    <property type="project" value="TreeGrafter"/>
</dbReference>
<dbReference type="GO" id="GO:0005886">
    <property type="term" value="C:plasma membrane"/>
    <property type="evidence" value="ECO:0007669"/>
    <property type="project" value="UniProtKB-SubCell"/>
</dbReference>
<dbReference type="GO" id="GO:0098552">
    <property type="term" value="C:side of membrane"/>
    <property type="evidence" value="ECO:0007669"/>
    <property type="project" value="UniProtKB-KW"/>
</dbReference>
<dbReference type="GO" id="GO:0004185">
    <property type="term" value="F:serine-type carboxypeptidase activity"/>
    <property type="evidence" value="ECO:0007669"/>
    <property type="project" value="UniProtKB-EC"/>
</dbReference>
<dbReference type="GO" id="GO:0006508">
    <property type="term" value="P:proteolysis"/>
    <property type="evidence" value="ECO:0007669"/>
    <property type="project" value="UniProtKB-KW"/>
</dbReference>
<dbReference type="Gene3D" id="3.40.50.1820">
    <property type="entry name" value="alpha/beta hydrolase"/>
    <property type="match status" value="1"/>
</dbReference>
<dbReference type="InterPro" id="IPR029058">
    <property type="entry name" value="AB_hydrolase_fold"/>
</dbReference>
<dbReference type="InterPro" id="IPR001563">
    <property type="entry name" value="Peptidase_S10"/>
</dbReference>
<dbReference type="InterPro" id="IPR018202">
    <property type="entry name" value="Ser_caboxypep_ser_AS"/>
</dbReference>
<dbReference type="PANTHER" id="PTHR11802:SF189">
    <property type="entry name" value="CARBOXYPEPTIDASE"/>
    <property type="match status" value="1"/>
</dbReference>
<dbReference type="PANTHER" id="PTHR11802">
    <property type="entry name" value="SERINE PROTEASE FAMILY S10 SERINE CARBOXYPEPTIDASE"/>
    <property type="match status" value="1"/>
</dbReference>
<dbReference type="Pfam" id="PF00450">
    <property type="entry name" value="Peptidase_S10"/>
    <property type="match status" value="1"/>
</dbReference>
<dbReference type="PRINTS" id="PR00724">
    <property type="entry name" value="CRBOXYPTASEC"/>
</dbReference>
<dbReference type="SUPFAM" id="SSF53474">
    <property type="entry name" value="alpha/beta-Hydrolases"/>
    <property type="match status" value="1"/>
</dbReference>
<dbReference type="PROSITE" id="PS00131">
    <property type="entry name" value="CARBOXYPEPT_SER_SER"/>
    <property type="match status" value="1"/>
</dbReference>